<name>FENR_RHOPB</name>
<protein>
    <recommendedName>
        <fullName evidence="1">Ferredoxin--NADP reductase</fullName>
        <shortName evidence="1">FNR</shortName>
        <shortName evidence="1">Fd-NADP(+) reductase</shortName>
        <ecNumber evidence="1">1.18.1.2</ecNumber>
    </recommendedName>
</protein>
<feature type="chain" id="PRO_0000364915" description="Ferredoxin--NADP reductase">
    <location>
        <begin position="1"/>
        <end position="342"/>
    </location>
</feature>
<feature type="binding site" evidence="1">
    <location>
        <position position="17"/>
    </location>
    <ligand>
        <name>FAD</name>
        <dbReference type="ChEBI" id="CHEBI:57692"/>
    </ligand>
</feature>
<feature type="binding site" evidence="1">
    <location>
        <position position="36"/>
    </location>
    <ligand>
        <name>FAD</name>
        <dbReference type="ChEBI" id="CHEBI:57692"/>
    </ligand>
</feature>
<feature type="binding site" evidence="1">
    <location>
        <position position="44"/>
    </location>
    <ligand>
        <name>FAD</name>
        <dbReference type="ChEBI" id="CHEBI:57692"/>
    </ligand>
</feature>
<feature type="binding site" evidence="1">
    <location>
        <position position="49"/>
    </location>
    <ligand>
        <name>FAD</name>
        <dbReference type="ChEBI" id="CHEBI:57692"/>
    </ligand>
</feature>
<feature type="binding site" evidence="1">
    <location>
        <position position="89"/>
    </location>
    <ligand>
        <name>FAD</name>
        <dbReference type="ChEBI" id="CHEBI:57692"/>
    </ligand>
</feature>
<feature type="binding site" evidence="1">
    <location>
        <position position="124"/>
    </location>
    <ligand>
        <name>FAD</name>
        <dbReference type="ChEBI" id="CHEBI:57692"/>
    </ligand>
</feature>
<feature type="binding site" evidence="1">
    <location>
        <position position="289"/>
    </location>
    <ligand>
        <name>FAD</name>
        <dbReference type="ChEBI" id="CHEBI:57692"/>
    </ligand>
</feature>
<feature type="binding site" evidence="1">
    <location>
        <position position="330"/>
    </location>
    <ligand>
        <name>FAD</name>
        <dbReference type="ChEBI" id="CHEBI:57692"/>
    </ligand>
</feature>
<gene>
    <name type="ordered locus">RPC_1458</name>
</gene>
<reference key="1">
    <citation type="submission" date="2006-03" db="EMBL/GenBank/DDBJ databases">
        <title>Complete sequence of Rhodopseudomonas palustris BisB18.</title>
        <authorList>
            <consortium name="US DOE Joint Genome Institute"/>
            <person name="Copeland A."/>
            <person name="Lucas S."/>
            <person name="Lapidus A."/>
            <person name="Barry K."/>
            <person name="Detter J.C."/>
            <person name="Glavina del Rio T."/>
            <person name="Hammon N."/>
            <person name="Israni S."/>
            <person name="Dalin E."/>
            <person name="Tice H."/>
            <person name="Pitluck S."/>
            <person name="Chain P."/>
            <person name="Malfatti S."/>
            <person name="Shin M."/>
            <person name="Vergez L."/>
            <person name="Schmutz J."/>
            <person name="Larimer F."/>
            <person name="Land M."/>
            <person name="Hauser L."/>
            <person name="Pelletier D.A."/>
            <person name="Kyrpides N."/>
            <person name="Anderson I."/>
            <person name="Oda Y."/>
            <person name="Harwood C.S."/>
            <person name="Richardson P."/>
        </authorList>
    </citation>
    <scope>NUCLEOTIDE SEQUENCE [LARGE SCALE GENOMIC DNA]</scope>
    <source>
        <strain>BisB18</strain>
    </source>
</reference>
<organism>
    <name type="scientific">Rhodopseudomonas palustris (strain BisB18)</name>
    <dbReference type="NCBI Taxonomy" id="316056"/>
    <lineage>
        <taxon>Bacteria</taxon>
        <taxon>Pseudomonadati</taxon>
        <taxon>Pseudomonadota</taxon>
        <taxon>Alphaproteobacteria</taxon>
        <taxon>Hyphomicrobiales</taxon>
        <taxon>Nitrobacteraceae</taxon>
        <taxon>Rhodopseudomonas</taxon>
    </lineage>
</organism>
<sequence length="342" mass="36930">MSEAIKTDVLIVGAGPCGLFAVFELGLLDVKVHLVDILDKIGGQCAELYPEKPIYDIPGIPMITGHGLTESLLEQIKPFNPTFHLNEMIETVEKIGDPGFRVTTDAGKVFECKVLVVAAGGGSFQPKRPPVPGIEAYEGGSVHYAVRKMEEFRDKDLMIVGGGDSALDWVLNLHPLAKRITLVHRRDDFRAAPHSVEQMRALVASGQMDLLIGQVTALDGEGKELSAATVKGNDGTTTKVACNAMLPFFGLTMKLGPVANWGLHLENNLVPVDTGTFETNVPGIFAIGDINTYPGKLKLILSGFHEGALMAQKAVKYVYPDKRVVFQYTTSSSSLQKKLGVN</sequence>
<proteinExistence type="inferred from homology"/>
<evidence type="ECO:0000255" key="1">
    <source>
        <dbReference type="HAMAP-Rule" id="MF_01685"/>
    </source>
</evidence>
<comment type="catalytic activity">
    <reaction evidence="1">
        <text>2 reduced [2Fe-2S]-[ferredoxin] + NADP(+) + H(+) = 2 oxidized [2Fe-2S]-[ferredoxin] + NADPH</text>
        <dbReference type="Rhea" id="RHEA:20125"/>
        <dbReference type="Rhea" id="RHEA-COMP:10000"/>
        <dbReference type="Rhea" id="RHEA-COMP:10001"/>
        <dbReference type="ChEBI" id="CHEBI:15378"/>
        <dbReference type="ChEBI" id="CHEBI:33737"/>
        <dbReference type="ChEBI" id="CHEBI:33738"/>
        <dbReference type="ChEBI" id="CHEBI:57783"/>
        <dbReference type="ChEBI" id="CHEBI:58349"/>
        <dbReference type="EC" id="1.18.1.2"/>
    </reaction>
</comment>
<comment type="cofactor">
    <cofactor evidence="1">
        <name>FAD</name>
        <dbReference type="ChEBI" id="CHEBI:57692"/>
    </cofactor>
    <text evidence="1">Binds 1 FAD per subunit.</text>
</comment>
<comment type="subunit">
    <text evidence="1">Homodimer.</text>
</comment>
<comment type="similarity">
    <text evidence="1">Belongs to the ferredoxin--NADP reductase type 2 family.</text>
</comment>
<accession>Q219B6</accession>
<keyword id="KW-0274">FAD</keyword>
<keyword id="KW-0285">Flavoprotein</keyword>
<keyword id="KW-0521">NADP</keyword>
<keyword id="KW-0560">Oxidoreductase</keyword>
<dbReference type="EC" id="1.18.1.2" evidence="1"/>
<dbReference type="EMBL" id="CP000301">
    <property type="protein sequence ID" value="ABD87020.1"/>
    <property type="molecule type" value="Genomic_DNA"/>
</dbReference>
<dbReference type="SMR" id="Q219B6"/>
<dbReference type="STRING" id="316056.RPC_1458"/>
<dbReference type="KEGG" id="rpc:RPC_1458"/>
<dbReference type="eggNOG" id="COG0492">
    <property type="taxonomic scope" value="Bacteria"/>
</dbReference>
<dbReference type="HOGENOM" id="CLU_031864_5_5_5"/>
<dbReference type="OrthoDB" id="9806179at2"/>
<dbReference type="GO" id="GO:0004324">
    <property type="term" value="F:ferredoxin-NADP+ reductase activity"/>
    <property type="evidence" value="ECO:0007669"/>
    <property type="project" value="UniProtKB-UniRule"/>
</dbReference>
<dbReference type="GO" id="GO:0050660">
    <property type="term" value="F:flavin adenine dinucleotide binding"/>
    <property type="evidence" value="ECO:0007669"/>
    <property type="project" value="UniProtKB-UniRule"/>
</dbReference>
<dbReference type="GO" id="GO:0050661">
    <property type="term" value="F:NADP binding"/>
    <property type="evidence" value="ECO:0007669"/>
    <property type="project" value="UniProtKB-UniRule"/>
</dbReference>
<dbReference type="Gene3D" id="3.50.50.60">
    <property type="entry name" value="FAD/NAD(P)-binding domain"/>
    <property type="match status" value="2"/>
</dbReference>
<dbReference type="HAMAP" id="MF_01685">
    <property type="entry name" value="FENR2"/>
    <property type="match status" value="1"/>
</dbReference>
<dbReference type="InterPro" id="IPR036188">
    <property type="entry name" value="FAD/NAD-bd_sf"/>
</dbReference>
<dbReference type="InterPro" id="IPR023753">
    <property type="entry name" value="FAD/NAD-binding_dom"/>
</dbReference>
<dbReference type="InterPro" id="IPR022890">
    <property type="entry name" value="Fd--NADP_Rdtase_type_2"/>
</dbReference>
<dbReference type="InterPro" id="IPR050097">
    <property type="entry name" value="Ferredoxin-NADP_redctase_2"/>
</dbReference>
<dbReference type="PANTHER" id="PTHR48105">
    <property type="entry name" value="THIOREDOXIN REDUCTASE 1-RELATED-RELATED"/>
    <property type="match status" value="1"/>
</dbReference>
<dbReference type="Pfam" id="PF07992">
    <property type="entry name" value="Pyr_redox_2"/>
    <property type="match status" value="1"/>
</dbReference>
<dbReference type="PRINTS" id="PR00368">
    <property type="entry name" value="FADPNR"/>
</dbReference>
<dbReference type="PRINTS" id="PR00469">
    <property type="entry name" value="PNDRDTASEII"/>
</dbReference>
<dbReference type="SUPFAM" id="SSF51905">
    <property type="entry name" value="FAD/NAD(P)-binding domain"/>
    <property type="match status" value="1"/>
</dbReference>